<name>SYGA_LIGS1</name>
<proteinExistence type="inferred from homology"/>
<protein>
    <recommendedName>
        <fullName evidence="1">Glycine--tRNA ligase alpha subunit</fullName>
        <ecNumber evidence="1">6.1.1.14</ecNumber>
    </recommendedName>
    <alternativeName>
        <fullName evidence="1">Glycyl-tRNA synthetase alpha subunit</fullName>
        <shortName evidence="1">GlyRS</shortName>
    </alternativeName>
</protein>
<organism>
    <name type="scientific">Ligilactobacillus salivarius (strain UCC118)</name>
    <name type="common">Lactobacillus salivarius</name>
    <dbReference type="NCBI Taxonomy" id="362948"/>
    <lineage>
        <taxon>Bacteria</taxon>
        <taxon>Bacillati</taxon>
        <taxon>Bacillota</taxon>
        <taxon>Bacilli</taxon>
        <taxon>Lactobacillales</taxon>
        <taxon>Lactobacillaceae</taxon>
        <taxon>Ligilactobacillus</taxon>
    </lineage>
</organism>
<evidence type="ECO:0000255" key="1">
    <source>
        <dbReference type="HAMAP-Rule" id="MF_00254"/>
    </source>
</evidence>
<comment type="catalytic activity">
    <reaction evidence="1">
        <text>tRNA(Gly) + glycine + ATP = glycyl-tRNA(Gly) + AMP + diphosphate</text>
        <dbReference type="Rhea" id="RHEA:16013"/>
        <dbReference type="Rhea" id="RHEA-COMP:9664"/>
        <dbReference type="Rhea" id="RHEA-COMP:9683"/>
        <dbReference type="ChEBI" id="CHEBI:30616"/>
        <dbReference type="ChEBI" id="CHEBI:33019"/>
        <dbReference type="ChEBI" id="CHEBI:57305"/>
        <dbReference type="ChEBI" id="CHEBI:78442"/>
        <dbReference type="ChEBI" id="CHEBI:78522"/>
        <dbReference type="ChEBI" id="CHEBI:456215"/>
        <dbReference type="EC" id="6.1.1.14"/>
    </reaction>
</comment>
<comment type="subunit">
    <text evidence="1">Tetramer of two alpha and two beta subunits.</text>
</comment>
<comment type="subcellular location">
    <subcellularLocation>
        <location evidence="1">Cytoplasm</location>
    </subcellularLocation>
</comment>
<comment type="similarity">
    <text evidence="1">Belongs to the class-II aminoacyl-tRNA synthetase family.</text>
</comment>
<gene>
    <name evidence="1" type="primary">glyQ</name>
    <name type="ordered locus">LSL_0912</name>
</gene>
<reference key="1">
    <citation type="journal article" date="2006" name="Proc. Natl. Acad. Sci. U.S.A.">
        <title>Multireplicon genome architecture of Lactobacillus salivarius.</title>
        <authorList>
            <person name="Claesson M.J."/>
            <person name="Li Y."/>
            <person name="Leahy S."/>
            <person name="Canchaya C."/>
            <person name="van Pijkeren J.P."/>
            <person name="Cerdeno-Tarraga A.M."/>
            <person name="Parkhill J."/>
            <person name="Flynn S."/>
            <person name="O'Sullivan G.C."/>
            <person name="Collins J.K."/>
            <person name="Higgins D."/>
            <person name="Shanahan F."/>
            <person name="Fitzgerald G.F."/>
            <person name="van Sinderen D."/>
            <person name="O'Toole P.W."/>
        </authorList>
    </citation>
    <scope>NUCLEOTIDE SEQUENCE [LARGE SCALE GENOMIC DNA]</scope>
    <source>
        <strain>UCC118</strain>
    </source>
</reference>
<feature type="chain" id="PRO_1000047438" description="Glycine--tRNA ligase alpha subunit">
    <location>
        <begin position="1"/>
        <end position="305"/>
    </location>
</feature>
<sequence length="305" mass="35109">MTKKLALQDIILTLQQFWAKQGCMLMQSYDTEKGAGTMSPYTFLRAIGPEPWNVAYVEPSRRPADGRYGDNPNRLYQHHQFQVLMKPSPSNIQELYLDSLRALGIEPKEHDIRFVEDNWENPSMGCAGVGWEVWLDGMEITQFTYFQQVGGLEVKPVAAEVTYGLERLSSYIQDVDSVYDLEWADGVKYGDIFKEPEYEHSKYSFEESNQEMLLNLFDTFETEAKKQLANGLVHPAYDYILKCSHTFNLLDARGAVSVTERAGYLSRIRNMAKSVAKVFVAERKKLGYPLIKDEKLRQELLKEEK</sequence>
<accession>Q1WTP0</accession>
<keyword id="KW-0030">Aminoacyl-tRNA synthetase</keyword>
<keyword id="KW-0067">ATP-binding</keyword>
<keyword id="KW-0963">Cytoplasm</keyword>
<keyword id="KW-0436">Ligase</keyword>
<keyword id="KW-0547">Nucleotide-binding</keyword>
<keyword id="KW-0648">Protein biosynthesis</keyword>
<keyword id="KW-1185">Reference proteome</keyword>
<dbReference type="EC" id="6.1.1.14" evidence="1"/>
<dbReference type="EMBL" id="CP000233">
    <property type="protein sequence ID" value="ABD99722.1"/>
    <property type="molecule type" value="Genomic_DNA"/>
</dbReference>
<dbReference type="RefSeq" id="WP_003700278.1">
    <property type="nucleotide sequence ID" value="NC_007929.1"/>
</dbReference>
<dbReference type="RefSeq" id="YP_535805.1">
    <property type="nucleotide sequence ID" value="NC_007929.1"/>
</dbReference>
<dbReference type="SMR" id="Q1WTP0"/>
<dbReference type="STRING" id="362948.LSL_0912"/>
<dbReference type="GeneID" id="89465693"/>
<dbReference type="KEGG" id="lsl:LSL_0912"/>
<dbReference type="PATRIC" id="fig|362948.14.peg.989"/>
<dbReference type="HOGENOM" id="CLU_057066_1_0_9"/>
<dbReference type="OrthoDB" id="9802183at2"/>
<dbReference type="Proteomes" id="UP000006559">
    <property type="component" value="Chromosome"/>
</dbReference>
<dbReference type="GO" id="GO:0005829">
    <property type="term" value="C:cytosol"/>
    <property type="evidence" value="ECO:0007669"/>
    <property type="project" value="TreeGrafter"/>
</dbReference>
<dbReference type="GO" id="GO:0005524">
    <property type="term" value="F:ATP binding"/>
    <property type="evidence" value="ECO:0007669"/>
    <property type="project" value="UniProtKB-UniRule"/>
</dbReference>
<dbReference type="GO" id="GO:0140096">
    <property type="term" value="F:catalytic activity, acting on a protein"/>
    <property type="evidence" value="ECO:0007669"/>
    <property type="project" value="UniProtKB-ARBA"/>
</dbReference>
<dbReference type="GO" id="GO:0004820">
    <property type="term" value="F:glycine-tRNA ligase activity"/>
    <property type="evidence" value="ECO:0007669"/>
    <property type="project" value="UniProtKB-UniRule"/>
</dbReference>
<dbReference type="GO" id="GO:0016740">
    <property type="term" value="F:transferase activity"/>
    <property type="evidence" value="ECO:0007669"/>
    <property type="project" value="UniProtKB-ARBA"/>
</dbReference>
<dbReference type="GO" id="GO:0006426">
    <property type="term" value="P:glycyl-tRNA aminoacylation"/>
    <property type="evidence" value="ECO:0007669"/>
    <property type="project" value="UniProtKB-UniRule"/>
</dbReference>
<dbReference type="CDD" id="cd00733">
    <property type="entry name" value="GlyRS_alpha_core"/>
    <property type="match status" value="1"/>
</dbReference>
<dbReference type="FunFam" id="3.30.930.10:FF:000006">
    <property type="entry name" value="Glycine--tRNA ligase alpha subunit"/>
    <property type="match status" value="1"/>
</dbReference>
<dbReference type="Gene3D" id="3.30.930.10">
    <property type="entry name" value="Bira Bifunctional Protein, Domain 2"/>
    <property type="match status" value="1"/>
</dbReference>
<dbReference type="Gene3D" id="1.20.58.180">
    <property type="entry name" value="Class II aaRS and biotin synthetases, domain 2"/>
    <property type="match status" value="1"/>
</dbReference>
<dbReference type="HAMAP" id="MF_00254">
    <property type="entry name" value="Gly_tRNA_synth_alpha"/>
    <property type="match status" value="1"/>
</dbReference>
<dbReference type="InterPro" id="IPR045864">
    <property type="entry name" value="aa-tRNA-synth_II/BPL/LPL"/>
</dbReference>
<dbReference type="InterPro" id="IPR006194">
    <property type="entry name" value="Gly-tRNA-synth_heterodimer"/>
</dbReference>
<dbReference type="InterPro" id="IPR002310">
    <property type="entry name" value="Gly-tRNA_ligase_asu"/>
</dbReference>
<dbReference type="NCBIfam" id="TIGR00388">
    <property type="entry name" value="glyQ"/>
    <property type="match status" value="1"/>
</dbReference>
<dbReference type="NCBIfam" id="NF006827">
    <property type="entry name" value="PRK09348.1"/>
    <property type="match status" value="1"/>
</dbReference>
<dbReference type="PANTHER" id="PTHR30075:SF2">
    <property type="entry name" value="GLYCINE--TRNA LIGASE, CHLOROPLASTIC_MITOCHONDRIAL 2"/>
    <property type="match status" value="1"/>
</dbReference>
<dbReference type="PANTHER" id="PTHR30075">
    <property type="entry name" value="GLYCYL-TRNA SYNTHETASE"/>
    <property type="match status" value="1"/>
</dbReference>
<dbReference type="Pfam" id="PF02091">
    <property type="entry name" value="tRNA-synt_2e"/>
    <property type="match status" value="1"/>
</dbReference>
<dbReference type="PRINTS" id="PR01044">
    <property type="entry name" value="TRNASYNTHGA"/>
</dbReference>
<dbReference type="SUPFAM" id="SSF55681">
    <property type="entry name" value="Class II aaRS and biotin synthetases"/>
    <property type="match status" value="1"/>
</dbReference>
<dbReference type="PROSITE" id="PS50861">
    <property type="entry name" value="AA_TRNA_LIGASE_II_GLYAB"/>
    <property type="match status" value="1"/>
</dbReference>